<sequence>MSELPRGSTIRKDAGLYGYERALRRHGIEPIAGVDEAGRGACAGPLVAGAAILPPGKAGIVPGLADSKLLTERARERCYEQIVRRAVSWSVVVVSHEECDRLGMHVANVEALRRAVALLDLPPAYVLTDGFPVDGLGVPGLAVWKGDRVAACISAASVLAKVTRDRIMTELDASWPAYDFKTHKGYITEVHSAALTAHGPSPIHRMRFVNVRRAAGLEPLDPVQNGEEAVELVEVTEGTR</sequence>
<protein>
    <recommendedName>
        <fullName evidence="1">Ribonuclease HII</fullName>
        <shortName evidence="1">RNase HII</shortName>
        <ecNumber evidence="1">3.1.26.4</ecNumber>
    </recommendedName>
</protein>
<evidence type="ECO:0000255" key="1">
    <source>
        <dbReference type="HAMAP-Rule" id="MF_00052"/>
    </source>
</evidence>
<evidence type="ECO:0000255" key="2">
    <source>
        <dbReference type="PROSITE-ProRule" id="PRU01319"/>
    </source>
</evidence>
<organism>
    <name type="scientific">Nocardioides sp. (strain ATCC BAA-499 / JS614)</name>
    <dbReference type="NCBI Taxonomy" id="196162"/>
    <lineage>
        <taxon>Bacteria</taxon>
        <taxon>Bacillati</taxon>
        <taxon>Actinomycetota</taxon>
        <taxon>Actinomycetes</taxon>
        <taxon>Propionibacteriales</taxon>
        <taxon>Nocardioidaceae</taxon>
        <taxon>Nocardioides</taxon>
    </lineage>
</organism>
<gene>
    <name evidence="1" type="primary">rnhB</name>
    <name type="ordered locus">Noca_3253</name>
</gene>
<feature type="chain" id="PRO_0000334928" description="Ribonuclease HII">
    <location>
        <begin position="1"/>
        <end position="240"/>
    </location>
</feature>
<feature type="domain" description="RNase H type-2" evidence="2">
    <location>
        <begin position="29"/>
        <end position="220"/>
    </location>
</feature>
<feature type="binding site" evidence="1">
    <location>
        <position position="35"/>
    </location>
    <ligand>
        <name>a divalent metal cation</name>
        <dbReference type="ChEBI" id="CHEBI:60240"/>
    </ligand>
</feature>
<feature type="binding site" evidence="1">
    <location>
        <position position="36"/>
    </location>
    <ligand>
        <name>a divalent metal cation</name>
        <dbReference type="ChEBI" id="CHEBI:60240"/>
    </ligand>
</feature>
<feature type="binding site" evidence="1">
    <location>
        <position position="129"/>
    </location>
    <ligand>
        <name>a divalent metal cation</name>
        <dbReference type="ChEBI" id="CHEBI:60240"/>
    </ligand>
</feature>
<accession>A1SLS0</accession>
<reference key="1">
    <citation type="submission" date="2006-12" db="EMBL/GenBank/DDBJ databases">
        <title>Complete sequence of chromosome 1 of Nocardioides sp. JS614.</title>
        <authorList>
            <person name="Copeland A."/>
            <person name="Lucas S."/>
            <person name="Lapidus A."/>
            <person name="Barry K."/>
            <person name="Detter J.C."/>
            <person name="Glavina del Rio T."/>
            <person name="Hammon N."/>
            <person name="Israni S."/>
            <person name="Dalin E."/>
            <person name="Tice H."/>
            <person name="Pitluck S."/>
            <person name="Thompson L.S."/>
            <person name="Brettin T."/>
            <person name="Bruce D."/>
            <person name="Han C."/>
            <person name="Tapia R."/>
            <person name="Schmutz J."/>
            <person name="Larimer F."/>
            <person name="Land M."/>
            <person name="Hauser L."/>
            <person name="Kyrpides N."/>
            <person name="Kim E."/>
            <person name="Mattes T."/>
            <person name="Gossett J."/>
            <person name="Richardson P."/>
        </authorList>
    </citation>
    <scope>NUCLEOTIDE SEQUENCE [LARGE SCALE GENOMIC DNA]</scope>
    <source>
        <strain>ATCC BAA-499 / JS614</strain>
    </source>
</reference>
<keyword id="KW-0963">Cytoplasm</keyword>
<keyword id="KW-0255">Endonuclease</keyword>
<keyword id="KW-0378">Hydrolase</keyword>
<keyword id="KW-0464">Manganese</keyword>
<keyword id="KW-0479">Metal-binding</keyword>
<keyword id="KW-0540">Nuclease</keyword>
<keyword id="KW-1185">Reference proteome</keyword>
<dbReference type="EC" id="3.1.26.4" evidence="1"/>
<dbReference type="EMBL" id="CP000509">
    <property type="protein sequence ID" value="ABL82755.1"/>
    <property type="molecule type" value="Genomic_DNA"/>
</dbReference>
<dbReference type="RefSeq" id="WP_011756689.1">
    <property type="nucleotide sequence ID" value="NC_008699.1"/>
</dbReference>
<dbReference type="SMR" id="A1SLS0"/>
<dbReference type="STRING" id="196162.Noca_3253"/>
<dbReference type="KEGG" id="nca:Noca_3253"/>
<dbReference type="eggNOG" id="COG0164">
    <property type="taxonomic scope" value="Bacteria"/>
</dbReference>
<dbReference type="HOGENOM" id="CLU_036532_1_0_11"/>
<dbReference type="OrthoDB" id="9803420at2"/>
<dbReference type="Proteomes" id="UP000000640">
    <property type="component" value="Chromosome"/>
</dbReference>
<dbReference type="GO" id="GO:0005737">
    <property type="term" value="C:cytoplasm"/>
    <property type="evidence" value="ECO:0007669"/>
    <property type="project" value="UniProtKB-SubCell"/>
</dbReference>
<dbReference type="GO" id="GO:0032299">
    <property type="term" value="C:ribonuclease H2 complex"/>
    <property type="evidence" value="ECO:0007669"/>
    <property type="project" value="TreeGrafter"/>
</dbReference>
<dbReference type="GO" id="GO:0030145">
    <property type="term" value="F:manganese ion binding"/>
    <property type="evidence" value="ECO:0007669"/>
    <property type="project" value="UniProtKB-UniRule"/>
</dbReference>
<dbReference type="GO" id="GO:0003723">
    <property type="term" value="F:RNA binding"/>
    <property type="evidence" value="ECO:0007669"/>
    <property type="project" value="InterPro"/>
</dbReference>
<dbReference type="GO" id="GO:0004523">
    <property type="term" value="F:RNA-DNA hybrid ribonuclease activity"/>
    <property type="evidence" value="ECO:0007669"/>
    <property type="project" value="UniProtKB-UniRule"/>
</dbReference>
<dbReference type="GO" id="GO:0043137">
    <property type="term" value="P:DNA replication, removal of RNA primer"/>
    <property type="evidence" value="ECO:0007669"/>
    <property type="project" value="TreeGrafter"/>
</dbReference>
<dbReference type="GO" id="GO:0006298">
    <property type="term" value="P:mismatch repair"/>
    <property type="evidence" value="ECO:0007669"/>
    <property type="project" value="TreeGrafter"/>
</dbReference>
<dbReference type="CDD" id="cd07182">
    <property type="entry name" value="RNase_HII_bacteria_HII_like"/>
    <property type="match status" value="1"/>
</dbReference>
<dbReference type="Gene3D" id="3.30.420.10">
    <property type="entry name" value="Ribonuclease H-like superfamily/Ribonuclease H"/>
    <property type="match status" value="1"/>
</dbReference>
<dbReference type="HAMAP" id="MF_00052_B">
    <property type="entry name" value="RNase_HII_B"/>
    <property type="match status" value="1"/>
</dbReference>
<dbReference type="InterPro" id="IPR022898">
    <property type="entry name" value="RNase_HII"/>
</dbReference>
<dbReference type="InterPro" id="IPR001352">
    <property type="entry name" value="RNase_HII/HIII"/>
</dbReference>
<dbReference type="InterPro" id="IPR024567">
    <property type="entry name" value="RNase_HII/HIII_dom"/>
</dbReference>
<dbReference type="InterPro" id="IPR012337">
    <property type="entry name" value="RNaseH-like_sf"/>
</dbReference>
<dbReference type="InterPro" id="IPR036397">
    <property type="entry name" value="RNaseH_sf"/>
</dbReference>
<dbReference type="NCBIfam" id="NF000595">
    <property type="entry name" value="PRK00015.1-3"/>
    <property type="match status" value="1"/>
</dbReference>
<dbReference type="NCBIfam" id="NF000598">
    <property type="entry name" value="PRK00015.2-2"/>
    <property type="match status" value="1"/>
</dbReference>
<dbReference type="PANTHER" id="PTHR10954">
    <property type="entry name" value="RIBONUCLEASE H2 SUBUNIT A"/>
    <property type="match status" value="1"/>
</dbReference>
<dbReference type="PANTHER" id="PTHR10954:SF18">
    <property type="entry name" value="RIBONUCLEASE HII"/>
    <property type="match status" value="1"/>
</dbReference>
<dbReference type="Pfam" id="PF01351">
    <property type="entry name" value="RNase_HII"/>
    <property type="match status" value="1"/>
</dbReference>
<dbReference type="SUPFAM" id="SSF53098">
    <property type="entry name" value="Ribonuclease H-like"/>
    <property type="match status" value="1"/>
</dbReference>
<dbReference type="PROSITE" id="PS51975">
    <property type="entry name" value="RNASE_H_2"/>
    <property type="match status" value="1"/>
</dbReference>
<name>RNH2_NOCSJ</name>
<proteinExistence type="inferred from homology"/>
<comment type="function">
    <text evidence="1">Endonuclease that specifically degrades the RNA of RNA-DNA hybrids.</text>
</comment>
<comment type="catalytic activity">
    <reaction evidence="1">
        <text>Endonucleolytic cleavage to 5'-phosphomonoester.</text>
        <dbReference type="EC" id="3.1.26.4"/>
    </reaction>
</comment>
<comment type="cofactor">
    <cofactor evidence="1">
        <name>Mn(2+)</name>
        <dbReference type="ChEBI" id="CHEBI:29035"/>
    </cofactor>
    <cofactor evidence="1">
        <name>Mg(2+)</name>
        <dbReference type="ChEBI" id="CHEBI:18420"/>
    </cofactor>
    <text evidence="1">Manganese or magnesium. Binds 1 divalent metal ion per monomer in the absence of substrate. May bind a second metal ion after substrate binding.</text>
</comment>
<comment type="subcellular location">
    <subcellularLocation>
        <location evidence="1">Cytoplasm</location>
    </subcellularLocation>
</comment>
<comment type="similarity">
    <text evidence="1">Belongs to the RNase HII family.</text>
</comment>